<reference key="1">
    <citation type="journal article" date="2004" name="Proc. Natl. Acad. Sci. U.S.A.">
        <title>Structural flexibility in the Burkholderia mallei genome.</title>
        <authorList>
            <person name="Nierman W.C."/>
            <person name="DeShazer D."/>
            <person name="Kim H.S."/>
            <person name="Tettelin H."/>
            <person name="Nelson K.E."/>
            <person name="Feldblyum T.V."/>
            <person name="Ulrich R.L."/>
            <person name="Ronning C.M."/>
            <person name="Brinkac L.M."/>
            <person name="Daugherty S.C."/>
            <person name="Davidsen T.D."/>
            <person name="DeBoy R.T."/>
            <person name="Dimitrov G."/>
            <person name="Dodson R.J."/>
            <person name="Durkin A.S."/>
            <person name="Gwinn M.L."/>
            <person name="Haft D.H."/>
            <person name="Khouri H.M."/>
            <person name="Kolonay J.F."/>
            <person name="Madupu R."/>
            <person name="Mohammoud Y."/>
            <person name="Nelson W.C."/>
            <person name="Radune D."/>
            <person name="Romero C.M."/>
            <person name="Sarria S."/>
            <person name="Selengut J."/>
            <person name="Shamblin C."/>
            <person name="Sullivan S.A."/>
            <person name="White O."/>
            <person name="Yu Y."/>
            <person name="Zafar N."/>
            <person name="Zhou L."/>
            <person name="Fraser C.M."/>
        </authorList>
    </citation>
    <scope>NUCLEOTIDE SEQUENCE [LARGE SCALE GENOMIC DNA]</scope>
    <source>
        <strain>ATCC 23344</strain>
    </source>
</reference>
<organism>
    <name type="scientific">Burkholderia mallei (strain ATCC 23344)</name>
    <dbReference type="NCBI Taxonomy" id="243160"/>
    <lineage>
        <taxon>Bacteria</taxon>
        <taxon>Pseudomonadati</taxon>
        <taxon>Pseudomonadota</taxon>
        <taxon>Betaproteobacteria</taxon>
        <taxon>Burkholderiales</taxon>
        <taxon>Burkholderiaceae</taxon>
        <taxon>Burkholderia</taxon>
        <taxon>pseudomallei group</taxon>
    </lineage>
</organism>
<protein>
    <recommendedName>
        <fullName evidence="1">Nucleotide-binding protein BMA0373</fullName>
    </recommendedName>
</protein>
<keyword id="KW-0547">Nucleotide-binding</keyword>
<keyword id="KW-1185">Reference proteome</keyword>
<dbReference type="EMBL" id="CP000010">
    <property type="protein sequence ID" value="AAU49184.1"/>
    <property type="molecule type" value="Genomic_DNA"/>
</dbReference>
<dbReference type="RefSeq" id="WP_004189237.1">
    <property type="nucleotide sequence ID" value="NC_006348.1"/>
</dbReference>
<dbReference type="RefSeq" id="YP_102190.1">
    <property type="nucleotide sequence ID" value="NC_006348.1"/>
</dbReference>
<dbReference type="SMR" id="Q62M78"/>
<dbReference type="KEGG" id="bma:BMA0373"/>
<dbReference type="PATRIC" id="fig|243160.12.peg.376"/>
<dbReference type="eggNOG" id="COG1666">
    <property type="taxonomic scope" value="Bacteria"/>
</dbReference>
<dbReference type="HOGENOM" id="CLU_099839_1_0_4"/>
<dbReference type="Proteomes" id="UP000006693">
    <property type="component" value="Chromosome 1"/>
</dbReference>
<dbReference type="GO" id="GO:0005829">
    <property type="term" value="C:cytosol"/>
    <property type="evidence" value="ECO:0007669"/>
    <property type="project" value="TreeGrafter"/>
</dbReference>
<dbReference type="GO" id="GO:0000166">
    <property type="term" value="F:nucleotide binding"/>
    <property type="evidence" value="ECO:0007669"/>
    <property type="project" value="TreeGrafter"/>
</dbReference>
<dbReference type="CDD" id="cd11740">
    <property type="entry name" value="YajQ_like"/>
    <property type="match status" value="1"/>
</dbReference>
<dbReference type="Gene3D" id="3.30.70.860">
    <property type="match status" value="1"/>
</dbReference>
<dbReference type="Gene3D" id="3.30.70.990">
    <property type="entry name" value="YajQ-like, domain 2"/>
    <property type="match status" value="1"/>
</dbReference>
<dbReference type="HAMAP" id="MF_00632">
    <property type="entry name" value="YajQ"/>
    <property type="match status" value="1"/>
</dbReference>
<dbReference type="InterPro" id="IPR007551">
    <property type="entry name" value="DUF520"/>
</dbReference>
<dbReference type="InterPro" id="IPR035571">
    <property type="entry name" value="UPF0234-like_C"/>
</dbReference>
<dbReference type="InterPro" id="IPR035570">
    <property type="entry name" value="UPF0234_N"/>
</dbReference>
<dbReference type="InterPro" id="IPR036183">
    <property type="entry name" value="YajQ-like_sf"/>
</dbReference>
<dbReference type="NCBIfam" id="NF003819">
    <property type="entry name" value="PRK05412.1"/>
    <property type="match status" value="1"/>
</dbReference>
<dbReference type="PANTHER" id="PTHR30476">
    <property type="entry name" value="UPF0234 PROTEIN YAJQ"/>
    <property type="match status" value="1"/>
</dbReference>
<dbReference type="PANTHER" id="PTHR30476:SF0">
    <property type="entry name" value="UPF0234 PROTEIN YAJQ"/>
    <property type="match status" value="1"/>
</dbReference>
<dbReference type="Pfam" id="PF04461">
    <property type="entry name" value="DUF520"/>
    <property type="match status" value="1"/>
</dbReference>
<dbReference type="SUPFAM" id="SSF89963">
    <property type="entry name" value="YajQ-like"/>
    <property type="match status" value="2"/>
</dbReference>
<sequence length="161" mass="18036">MPSFDVVSEANMIEVKNAVEQSNKEISTRFDFKGSDARVEQKERELTLYADDDFKLGQVKDVLIGKMAKRNVDVRFLDYGKIEKIGGDKVKQVVTIKKGVSGDLAKKVVRIVKDSKIKVQASIQGDAVRVSGAKRDDLQSTIALLRKEVTDTPLDFNNFRD</sequence>
<name>Y373_BURMA</name>
<feature type="chain" id="PRO_0000261922" description="Nucleotide-binding protein BMA0373">
    <location>
        <begin position="1"/>
        <end position="161"/>
    </location>
</feature>
<accession>Q62M78</accession>
<comment type="function">
    <text evidence="1">Nucleotide-binding protein.</text>
</comment>
<comment type="similarity">
    <text evidence="1">Belongs to the YajQ family.</text>
</comment>
<evidence type="ECO:0000255" key="1">
    <source>
        <dbReference type="HAMAP-Rule" id="MF_00632"/>
    </source>
</evidence>
<gene>
    <name type="ordered locus">BMA0373</name>
</gene>
<proteinExistence type="inferred from homology"/>